<name>LECG_THANI</name>
<feature type="signal peptide" evidence="2">
    <location>
        <begin position="1"/>
        <end position="21"/>
    </location>
</feature>
<feature type="propeptide" id="PRO_0000017566">
    <location>
        <begin position="22"/>
        <end position="24"/>
    </location>
</feature>
<feature type="chain" id="PRO_0000017567" description="Galactose-specific lectin nattectin">
    <location>
        <begin position="27"/>
        <end position="159"/>
    </location>
</feature>
<feature type="domain" description="C-type lectin" evidence="3">
    <location>
        <begin position="38"/>
        <end position="156"/>
    </location>
</feature>
<feature type="short sequence motif" description="Galactose-binding">
    <location>
        <begin position="122"/>
        <end position="124"/>
    </location>
</feature>
<feature type="binding site" evidence="1">
    <location>
        <position position="122"/>
    </location>
    <ligand>
        <name>Ca(2+)</name>
        <dbReference type="ChEBI" id="CHEBI:29108"/>
    </ligand>
</feature>
<feature type="binding site" evidence="1">
    <location>
        <position position="124"/>
    </location>
    <ligand>
        <name>Ca(2+)</name>
        <dbReference type="ChEBI" id="CHEBI:29108"/>
    </ligand>
</feature>
<feature type="binding site" evidence="1">
    <location>
        <position position="130"/>
    </location>
    <ligand>
        <name>Ca(2+)</name>
        <dbReference type="ChEBI" id="CHEBI:29108"/>
    </ligand>
</feature>
<feature type="binding site" evidence="1">
    <location>
        <position position="143"/>
    </location>
    <ligand>
        <name>Ca(2+)</name>
        <dbReference type="ChEBI" id="CHEBI:29108"/>
    </ligand>
</feature>
<feature type="disulfide bond" evidence="3">
    <location>
        <begin position="31"/>
        <end position="42"/>
    </location>
</feature>
<feature type="disulfide bond" evidence="3">
    <location>
        <begin position="59"/>
        <end position="155"/>
    </location>
</feature>
<feature type="disulfide bond" evidence="3">
    <location>
        <begin position="132"/>
        <end position="147"/>
    </location>
</feature>
<accession>Q66S03</accession>
<dbReference type="EMBL" id="AY707913">
    <property type="protein sequence ID" value="AAU11827.1"/>
    <property type="molecule type" value="mRNA"/>
</dbReference>
<dbReference type="SMR" id="Q66S03"/>
<dbReference type="GO" id="GO:0005576">
    <property type="term" value="C:extracellular region"/>
    <property type="evidence" value="ECO:0007669"/>
    <property type="project" value="UniProtKB-SubCell"/>
</dbReference>
<dbReference type="GO" id="GO:0030246">
    <property type="term" value="F:carbohydrate binding"/>
    <property type="evidence" value="ECO:0007669"/>
    <property type="project" value="UniProtKB-KW"/>
</dbReference>
<dbReference type="GO" id="GO:0046872">
    <property type="term" value="F:metal ion binding"/>
    <property type="evidence" value="ECO:0007669"/>
    <property type="project" value="UniProtKB-KW"/>
</dbReference>
<dbReference type="GO" id="GO:0090729">
    <property type="term" value="F:toxin activity"/>
    <property type="evidence" value="ECO:0007669"/>
    <property type="project" value="UniProtKB-KW"/>
</dbReference>
<dbReference type="GO" id="GO:0006954">
    <property type="term" value="P:inflammatory response"/>
    <property type="evidence" value="ECO:0007669"/>
    <property type="project" value="UniProtKB-KW"/>
</dbReference>
<dbReference type="Gene3D" id="3.10.100.10">
    <property type="entry name" value="Mannose-Binding Protein A, subunit A"/>
    <property type="match status" value="1"/>
</dbReference>
<dbReference type="InterPro" id="IPR001304">
    <property type="entry name" value="C-type_lectin-like"/>
</dbReference>
<dbReference type="InterPro" id="IPR016186">
    <property type="entry name" value="C-type_lectin-like/link_sf"/>
</dbReference>
<dbReference type="InterPro" id="IPR050111">
    <property type="entry name" value="C-type_lectin/snaclec_domain"/>
</dbReference>
<dbReference type="InterPro" id="IPR016187">
    <property type="entry name" value="CTDL_fold"/>
</dbReference>
<dbReference type="PANTHER" id="PTHR22803">
    <property type="entry name" value="MANNOSE, PHOSPHOLIPASE, LECTIN RECEPTOR RELATED"/>
    <property type="match status" value="1"/>
</dbReference>
<dbReference type="Pfam" id="PF00059">
    <property type="entry name" value="Lectin_C"/>
    <property type="match status" value="1"/>
</dbReference>
<dbReference type="PRINTS" id="PR01504">
    <property type="entry name" value="PNCREATITSAP"/>
</dbReference>
<dbReference type="SMART" id="SM00034">
    <property type="entry name" value="CLECT"/>
    <property type="match status" value="1"/>
</dbReference>
<dbReference type="SUPFAM" id="SSF56436">
    <property type="entry name" value="C-type lectin-like"/>
    <property type="match status" value="1"/>
</dbReference>
<dbReference type="PROSITE" id="PS50041">
    <property type="entry name" value="C_TYPE_LECTIN_2"/>
    <property type="match status" value="1"/>
</dbReference>
<comment type="function">
    <text evidence="4">Galactose specific lectin that exhibits hemagglutination activity (minimum hemagluttination concentration = 2.5 ug/well) in a calcium-independent fashion. Has remarkable pro-inflammatory activity, inducing neutrophil mobilization in mice. Plays a crucial role in the innate immune system and chronic manifestations, especially in neutrophil mobilization.</text>
</comment>
<comment type="subunit">
    <text evidence="4">Monomer.</text>
</comment>
<comment type="subcellular location">
    <subcellularLocation>
        <location evidence="1">Secreted</location>
    </subcellularLocation>
</comment>
<comment type="tissue specificity">
    <text>Expressed by the venom gland.</text>
</comment>
<comment type="induction">
    <text evidence="4">Hemagglutination is completely inhibited by galactose. Is not inhibited by mannose, and the chelating agent EDTA.</text>
</comment>
<comment type="PTM">
    <text evidence="4">Not glycosylated.</text>
</comment>
<comment type="mass spectrometry"/>
<comment type="similarity">
    <text evidence="5">Belongs to the true venom lectin family.</text>
</comment>
<reference key="1">
    <citation type="journal article" date="2011" name="Biochimie">
        <title>Structural and biological characterization of nattectin, a new C-type lectin from the venomous fish Thalassophryne nattereri.</title>
        <authorList>
            <person name="Lopes-Ferreira M."/>
            <person name="Magalhaes G.S."/>
            <person name="Fernandez J.H."/>
            <person name="Junqueira-de-Azevedo Ide L."/>
            <person name="Le Ho P."/>
            <person name="Lima C."/>
            <person name="Valente R.H."/>
            <person name="Moura-da-Silva A.M."/>
        </authorList>
    </citation>
    <scope>NUCLEOTIDE SEQUENCE [MRNA]</scope>
    <scope>PROTEIN SEQUENCE OF 27-41</scope>
    <scope>FUNCTION</scope>
    <scope>BIOASSAY</scope>
    <scope>SUBUNIT</scope>
    <scope>INDUCTION</scope>
    <scope>MASS SPECTROMETRY</scope>
    <source>
        <tissue>Venom</tissue>
        <tissue>Venom gland</tissue>
    </source>
</reference>
<reference key="2">
    <citation type="submission" date="2004-08" db="EMBL/GenBank/DDBJ databases">
        <title>A survey of gene expression and diversity in the venom gland of Thalassophryne nattereri through the generation of expressed sequence tags (ESTs).</title>
        <authorList>
            <person name="Magalhaes G.S."/>
            <person name="Lopes-Ferreira M."/>
            <person name="Junqueira-de-Azevedo I.L.M."/>
            <person name="Ho P.L."/>
            <person name="Moura-da-Silva A.M."/>
        </authorList>
    </citation>
    <scope>NUCLEOTIDE SEQUENCE [MRNA]</scope>
    <source>
        <tissue>Venom gland</tissue>
    </source>
</reference>
<organism>
    <name type="scientific">Thalassophryne nattereri</name>
    <name type="common">Copper Joe toadfish</name>
    <dbReference type="NCBI Taxonomy" id="289382"/>
    <lineage>
        <taxon>Eukaryota</taxon>
        <taxon>Metazoa</taxon>
        <taxon>Chordata</taxon>
        <taxon>Craniata</taxon>
        <taxon>Vertebrata</taxon>
        <taxon>Euteleostomi</taxon>
        <taxon>Actinopterygii</taxon>
        <taxon>Neopterygii</taxon>
        <taxon>Teleostei</taxon>
        <taxon>Neoteleostei</taxon>
        <taxon>Acanthomorphata</taxon>
        <taxon>Batrachoidaria</taxon>
        <taxon>Batrachoididae</taxon>
        <taxon>Thalassophryne</taxon>
    </lineage>
</organism>
<sequence>MASVPHFTVFLFLACALGIGANVTRRATSSCPKGWTHHGSRCFTFHRGSMDWASAEAACIRKGGNLASIHNRREQNFITHLIHKLSGENRRTWIGGNDAVKEGMWFWSDGSKFNYKGWKKGQPDKHVPAEHCAETNFKGAFWNNALCKVKRSFLCAKNL</sequence>
<protein>
    <recommendedName>
        <fullName>Galactose-specific lectin nattectin</fullName>
        <shortName>CTL</shortName>
    </recommendedName>
</protein>
<proteinExistence type="evidence at protein level"/>
<evidence type="ECO:0000250" key="1"/>
<evidence type="ECO:0000255" key="2"/>
<evidence type="ECO:0000255" key="3">
    <source>
        <dbReference type="PROSITE-ProRule" id="PRU00040"/>
    </source>
</evidence>
<evidence type="ECO:0000269" key="4">
    <source>
    </source>
</evidence>
<evidence type="ECO:0000305" key="5"/>
<keyword id="KW-0106">Calcium</keyword>
<keyword id="KW-0165">Cleavage on pair of basic residues</keyword>
<keyword id="KW-0903">Direct protein sequencing</keyword>
<keyword id="KW-1015">Disulfide bond</keyword>
<keyword id="KW-0348">Hemagglutinin</keyword>
<keyword id="KW-0395">Inflammatory response</keyword>
<keyword id="KW-0430">Lectin</keyword>
<keyword id="KW-0479">Metal-binding</keyword>
<keyword id="KW-0964">Secreted</keyword>
<keyword id="KW-0732">Signal</keyword>
<keyword id="KW-0800">Toxin</keyword>